<feature type="chain" id="PRO_1000059339" description="V-type ATP synthase alpha chain">
    <location>
        <begin position="1"/>
        <end position="591"/>
    </location>
</feature>
<feature type="binding site" evidence="1">
    <location>
        <begin position="232"/>
        <end position="239"/>
    </location>
    <ligand>
        <name>ATP</name>
        <dbReference type="ChEBI" id="CHEBI:30616"/>
    </ligand>
</feature>
<sequence>MKTGKIIKVSGPLVVAEGMDEANVYDVVKVGEKGLIGEIIEMRGDKASIQVYEETSGIGPGDPVITTGEPLSVELGPGLIESMFDGIQRPLDAFMKAANSAFLSKGVEVKSLNREKKWPFVPTAKVGDKVSAGDVIGTVQETAVVLHRIMVPFGVEGTIKEIKAGDFNVEEVIAVVETEKGDKNLTLMQKWPVRKGRPYARKLNPVEPMTTGQRVIDTFFPVAKGGAAAVPGPFGAGKTVVQHQVAKWGDTEIVVYVGCGERGNEMTDVLNEFPELKDPKTGESLMKRTVLIANTSNMPVAAREASIYTGITIAEYFRDMGYSVSIMADSTSRWAEALREMSGRLEEMPGDEGYPAYLGSRLADYYERAGKVVALGKDGREGAVTAIGAVSPPGGDISEPVTQSTLRIVKVFWGLDAQLAYKRHFPSINWLTSYSLYLEKMGEWMDAHVADDWSALRTEAMALLQEEANLEEIVRLVGMDALSEGDRLKLEVAKSIREDYLQQNAFHENDTYTSLNKQYKMLNLILSFRHEAEKALEAGVYLDKVLKLPVRDRIARSKYISEEEISKMDDILVELKSEMNKLISEGGVLNA</sequence>
<proteinExistence type="inferred from homology"/>
<reference key="1">
    <citation type="journal article" date="2006" name="Genome Res.">
        <title>Skewed genomic variability in strains of the toxigenic bacterial pathogen, Clostridium perfringens.</title>
        <authorList>
            <person name="Myers G.S.A."/>
            <person name="Rasko D.A."/>
            <person name="Cheung J.K."/>
            <person name="Ravel J."/>
            <person name="Seshadri R."/>
            <person name="DeBoy R.T."/>
            <person name="Ren Q."/>
            <person name="Varga J."/>
            <person name="Awad M.M."/>
            <person name="Brinkac L.M."/>
            <person name="Daugherty S.C."/>
            <person name="Haft D.H."/>
            <person name="Dodson R.J."/>
            <person name="Madupu R."/>
            <person name="Nelson W.C."/>
            <person name="Rosovitz M.J."/>
            <person name="Sullivan S.A."/>
            <person name="Khouri H."/>
            <person name="Dimitrov G.I."/>
            <person name="Watkins K.L."/>
            <person name="Mulligan S."/>
            <person name="Benton J."/>
            <person name="Radune D."/>
            <person name="Fisher D.J."/>
            <person name="Atkins H.S."/>
            <person name="Hiscox T."/>
            <person name="Jost B.H."/>
            <person name="Billington S.J."/>
            <person name="Songer J.G."/>
            <person name="McClane B.A."/>
            <person name="Titball R.W."/>
            <person name="Rood J.I."/>
            <person name="Melville S.B."/>
            <person name="Paulsen I.T."/>
        </authorList>
    </citation>
    <scope>NUCLEOTIDE SEQUENCE [LARGE SCALE GENOMIC DNA]</scope>
    <source>
        <strain>SM101 / Type A</strain>
    </source>
</reference>
<protein>
    <recommendedName>
        <fullName evidence="1">V-type ATP synthase alpha chain</fullName>
        <ecNumber evidence="1">7.1.2.2</ecNumber>
    </recommendedName>
    <alternativeName>
        <fullName evidence="1">V-ATPase subunit A</fullName>
    </alternativeName>
</protein>
<organism>
    <name type="scientific">Clostridium perfringens (strain SM101 / Type A)</name>
    <dbReference type="NCBI Taxonomy" id="289380"/>
    <lineage>
        <taxon>Bacteria</taxon>
        <taxon>Bacillati</taxon>
        <taxon>Bacillota</taxon>
        <taxon>Clostridia</taxon>
        <taxon>Eubacteriales</taxon>
        <taxon>Clostridiaceae</taxon>
        <taxon>Clostridium</taxon>
    </lineage>
</organism>
<dbReference type="EC" id="7.1.2.2" evidence="1"/>
<dbReference type="EMBL" id="CP000312">
    <property type="protein sequence ID" value="ABG87612.1"/>
    <property type="molecule type" value="Genomic_DNA"/>
</dbReference>
<dbReference type="RefSeq" id="WP_011592551.1">
    <property type="nucleotide sequence ID" value="NC_008262.1"/>
</dbReference>
<dbReference type="SMR" id="Q0SSI2"/>
<dbReference type="KEGG" id="cpr:CPR_1609"/>
<dbReference type="Proteomes" id="UP000001824">
    <property type="component" value="Chromosome"/>
</dbReference>
<dbReference type="GO" id="GO:0045259">
    <property type="term" value="C:proton-transporting ATP synthase complex"/>
    <property type="evidence" value="ECO:0007669"/>
    <property type="project" value="UniProtKB-ARBA"/>
</dbReference>
<dbReference type="GO" id="GO:0005524">
    <property type="term" value="F:ATP binding"/>
    <property type="evidence" value="ECO:0007669"/>
    <property type="project" value="UniProtKB-UniRule"/>
</dbReference>
<dbReference type="GO" id="GO:0046933">
    <property type="term" value="F:proton-transporting ATP synthase activity, rotational mechanism"/>
    <property type="evidence" value="ECO:0007669"/>
    <property type="project" value="UniProtKB-UniRule"/>
</dbReference>
<dbReference type="GO" id="GO:0046961">
    <property type="term" value="F:proton-transporting ATPase activity, rotational mechanism"/>
    <property type="evidence" value="ECO:0007669"/>
    <property type="project" value="InterPro"/>
</dbReference>
<dbReference type="GO" id="GO:0042777">
    <property type="term" value="P:proton motive force-driven plasma membrane ATP synthesis"/>
    <property type="evidence" value="ECO:0007669"/>
    <property type="project" value="UniProtKB-UniRule"/>
</dbReference>
<dbReference type="CDD" id="cd18111">
    <property type="entry name" value="ATP-synt_V_A-type_alpha_C"/>
    <property type="match status" value="1"/>
</dbReference>
<dbReference type="CDD" id="cd18119">
    <property type="entry name" value="ATP-synt_V_A-type_alpha_N"/>
    <property type="match status" value="1"/>
</dbReference>
<dbReference type="CDD" id="cd01134">
    <property type="entry name" value="V_A-ATPase_A"/>
    <property type="match status" value="1"/>
</dbReference>
<dbReference type="FunFam" id="2.40.30.20:FF:000002">
    <property type="entry name" value="V-type proton ATPase catalytic subunit A"/>
    <property type="match status" value="1"/>
</dbReference>
<dbReference type="FunFam" id="2.40.50.100:FF:000008">
    <property type="entry name" value="V-type proton ATPase catalytic subunit A"/>
    <property type="match status" value="1"/>
</dbReference>
<dbReference type="Gene3D" id="2.40.30.20">
    <property type="match status" value="1"/>
</dbReference>
<dbReference type="Gene3D" id="2.40.50.100">
    <property type="match status" value="1"/>
</dbReference>
<dbReference type="Gene3D" id="1.10.1140.10">
    <property type="entry name" value="Bovine Mitochondrial F1-atpase, Atp Synthase Beta Chain, Chain D, domain 3"/>
    <property type="match status" value="1"/>
</dbReference>
<dbReference type="Gene3D" id="3.40.50.300">
    <property type="entry name" value="P-loop containing nucleotide triphosphate hydrolases"/>
    <property type="match status" value="1"/>
</dbReference>
<dbReference type="HAMAP" id="MF_00309">
    <property type="entry name" value="ATP_synth_A_arch"/>
    <property type="match status" value="1"/>
</dbReference>
<dbReference type="InterPro" id="IPR055190">
    <property type="entry name" value="ATP-synt_VA_C"/>
</dbReference>
<dbReference type="InterPro" id="IPR031686">
    <property type="entry name" value="ATP-synth_a_Xtn"/>
</dbReference>
<dbReference type="InterPro" id="IPR023366">
    <property type="entry name" value="ATP_synth_asu-like_sf"/>
</dbReference>
<dbReference type="InterPro" id="IPR020003">
    <property type="entry name" value="ATPase_a/bsu_AS"/>
</dbReference>
<dbReference type="InterPro" id="IPR004100">
    <property type="entry name" value="ATPase_F1/V1/A1_a/bsu_N"/>
</dbReference>
<dbReference type="InterPro" id="IPR036121">
    <property type="entry name" value="ATPase_F1/V1/A1_a/bsu_N_sf"/>
</dbReference>
<dbReference type="InterPro" id="IPR000194">
    <property type="entry name" value="ATPase_F1/V1/A1_a/bsu_nucl-bd"/>
</dbReference>
<dbReference type="InterPro" id="IPR024034">
    <property type="entry name" value="ATPase_F1/V1_b/a_C"/>
</dbReference>
<dbReference type="InterPro" id="IPR027417">
    <property type="entry name" value="P-loop_NTPase"/>
</dbReference>
<dbReference type="InterPro" id="IPR022878">
    <property type="entry name" value="V-ATPase_asu"/>
</dbReference>
<dbReference type="NCBIfam" id="NF003220">
    <property type="entry name" value="PRK04192.1"/>
    <property type="match status" value="1"/>
</dbReference>
<dbReference type="PANTHER" id="PTHR43607:SF1">
    <property type="entry name" value="H(+)-TRANSPORTING TWO-SECTOR ATPASE"/>
    <property type="match status" value="1"/>
</dbReference>
<dbReference type="PANTHER" id="PTHR43607">
    <property type="entry name" value="V-TYPE PROTON ATPASE CATALYTIC SUBUNIT A"/>
    <property type="match status" value="1"/>
</dbReference>
<dbReference type="Pfam" id="PF00006">
    <property type="entry name" value="ATP-synt_ab"/>
    <property type="match status" value="1"/>
</dbReference>
<dbReference type="Pfam" id="PF02874">
    <property type="entry name" value="ATP-synt_ab_N"/>
    <property type="match status" value="1"/>
</dbReference>
<dbReference type="Pfam" id="PF16886">
    <property type="entry name" value="ATP-synt_ab_Xtn"/>
    <property type="match status" value="1"/>
</dbReference>
<dbReference type="Pfam" id="PF22919">
    <property type="entry name" value="ATP-synt_VA_C"/>
    <property type="match status" value="1"/>
</dbReference>
<dbReference type="SUPFAM" id="SSF47917">
    <property type="entry name" value="C-terminal domain of alpha and beta subunits of F1 ATP synthase"/>
    <property type="match status" value="1"/>
</dbReference>
<dbReference type="SUPFAM" id="SSF50615">
    <property type="entry name" value="N-terminal domain of alpha and beta subunits of F1 ATP synthase"/>
    <property type="match status" value="1"/>
</dbReference>
<dbReference type="SUPFAM" id="SSF52540">
    <property type="entry name" value="P-loop containing nucleoside triphosphate hydrolases"/>
    <property type="match status" value="1"/>
</dbReference>
<dbReference type="PROSITE" id="PS00152">
    <property type="entry name" value="ATPASE_ALPHA_BETA"/>
    <property type="match status" value="1"/>
</dbReference>
<comment type="function">
    <text evidence="1">Produces ATP from ADP in the presence of a proton gradient across the membrane. The V-type alpha chain is a catalytic subunit.</text>
</comment>
<comment type="catalytic activity">
    <reaction evidence="1">
        <text>ATP + H2O + 4 H(+)(in) = ADP + phosphate + 5 H(+)(out)</text>
        <dbReference type="Rhea" id="RHEA:57720"/>
        <dbReference type="ChEBI" id="CHEBI:15377"/>
        <dbReference type="ChEBI" id="CHEBI:15378"/>
        <dbReference type="ChEBI" id="CHEBI:30616"/>
        <dbReference type="ChEBI" id="CHEBI:43474"/>
        <dbReference type="ChEBI" id="CHEBI:456216"/>
        <dbReference type="EC" id="7.1.2.2"/>
    </reaction>
</comment>
<comment type="similarity">
    <text evidence="1">Belongs to the ATPase alpha/beta chains family.</text>
</comment>
<keyword id="KW-0066">ATP synthesis</keyword>
<keyword id="KW-0067">ATP-binding</keyword>
<keyword id="KW-0375">Hydrogen ion transport</keyword>
<keyword id="KW-0406">Ion transport</keyword>
<keyword id="KW-0547">Nucleotide-binding</keyword>
<keyword id="KW-1278">Translocase</keyword>
<keyword id="KW-0813">Transport</keyword>
<evidence type="ECO:0000255" key="1">
    <source>
        <dbReference type="HAMAP-Rule" id="MF_00309"/>
    </source>
</evidence>
<accession>Q0SSI2</accession>
<name>VATA_CLOPS</name>
<gene>
    <name evidence="1" type="primary">atpA</name>
    <name type="ordered locus">CPR_1609</name>
</gene>